<evidence type="ECO:0000250" key="1">
    <source>
        <dbReference type="UniProtKB" id="Q8BH16"/>
    </source>
</evidence>
<evidence type="ECO:0000250" key="2">
    <source>
        <dbReference type="UniProtKB" id="Q9UKC9"/>
    </source>
</evidence>
<evidence type="ECO:0000255" key="3">
    <source>
        <dbReference type="PROSITE-ProRule" id="PRU00080"/>
    </source>
</evidence>
<evidence type="ECO:0000303" key="4">
    <source ref="1"/>
</evidence>
<evidence type="ECO:0000305" key="5"/>
<proteinExistence type="evidence at transcript level"/>
<feature type="chain" id="PRO_0000354085" description="F-box/LRR-repeat protein 2">
    <location>
        <begin position="1"/>
        <end position="423"/>
    </location>
</feature>
<feature type="domain" description="F-box" evidence="3">
    <location>
        <begin position="9"/>
        <end position="55"/>
    </location>
</feature>
<feature type="repeat" description="LRR 1">
    <location>
        <begin position="61"/>
        <end position="87"/>
    </location>
</feature>
<feature type="repeat" description="LRR 2">
    <location>
        <begin position="88"/>
        <end position="113"/>
    </location>
</feature>
<feature type="repeat" description="LRR 3">
    <location>
        <begin position="114"/>
        <end position="139"/>
    </location>
</feature>
<feature type="repeat" description="LRR 4">
    <location>
        <begin position="140"/>
        <end position="165"/>
    </location>
</feature>
<feature type="repeat" description="LRR 5">
    <location>
        <begin position="166"/>
        <end position="191"/>
    </location>
</feature>
<feature type="repeat" description="LRR 6">
    <location>
        <begin position="192"/>
        <end position="217"/>
    </location>
</feature>
<feature type="repeat" description="LRR 7">
    <location>
        <begin position="218"/>
        <end position="243"/>
    </location>
</feature>
<feature type="repeat" description="LRR 8">
    <location>
        <begin position="244"/>
        <end position="269"/>
    </location>
</feature>
<feature type="repeat" description="LRR 9">
    <location>
        <begin position="270"/>
        <end position="295"/>
    </location>
</feature>
<feature type="repeat" description="LRR 10">
    <location>
        <begin position="296"/>
        <end position="321"/>
    </location>
</feature>
<feature type="repeat" description="LRR 11">
    <location>
        <begin position="322"/>
        <end position="350"/>
    </location>
</feature>
<feature type="repeat" description="LRR 12">
    <location>
        <begin position="351"/>
        <end position="375"/>
    </location>
</feature>
<feature type="repeat" description="LRR 13">
    <location>
        <begin position="376"/>
        <end position="401"/>
    </location>
</feature>
<feature type="region of interest" description="Interaction with Calmodulin" evidence="1">
    <location>
        <begin position="80"/>
        <end position="90"/>
    </location>
</feature>
<feature type="short sequence motif" description="CAAX motif">
    <location>
        <begin position="420"/>
        <end position="423"/>
    </location>
</feature>
<feature type="modified residue" description="Phosphothreonine" evidence="1">
    <location>
        <position position="404"/>
    </location>
</feature>
<feature type="lipid moiety-binding region" description="S-geranylgeranyl cysteine" evidence="2">
    <location>
        <position position="420"/>
    </location>
</feature>
<feature type="cross-link" description="Glycyl lysine isopeptide (Lys-Gly) (interchain with G-Cter in ubiquitin)" evidence="1">
    <location>
        <position position="201"/>
    </location>
</feature>
<feature type="splice variant" id="VSP_035780" description="In isoform 2." evidence="4">
    <location>
        <begin position="1"/>
        <end position="105"/>
    </location>
</feature>
<feature type="splice variant" id="VSP_035781" description="In isoform 2." evidence="4">
    <original>IEHLNLNGCTKITD</original>
    <variation>MDAQKSLTVRLLFF</variation>
    <location>
        <begin position="106"/>
        <end position="119"/>
    </location>
</feature>
<feature type="sequence conflict" description="In Ref. 1; CAH93415." evidence="5" ref="1">
    <original>S</original>
    <variation>P</variation>
    <location>
        <position position="147"/>
    </location>
</feature>
<feature type="sequence conflict" description="In Ref. 1; CAH93415." evidence="5" ref="1">
    <original>S</original>
    <variation>G</variation>
    <location>
        <position position="302"/>
    </location>
</feature>
<name>FBXL2_PONAB</name>
<gene>
    <name evidence="5" type="primary">FBXL2</name>
</gene>
<comment type="function">
    <text evidence="1 2">Calcium-activated substrate recognition component of the SCF (SKP1-cullin-F-box protein) E3 ubiquitin-protein ligase complex, SCF(FBXL2), which mediates the ubiquitination and subsequent proteasomal degradation of target proteins (By similarity). Unlike many F-box proteins, FBXL2 does not seem to target phosphodegron within its substrates but rather calmodulin-binding motifs and is thereby antagonized by calmodulin. This is the case for the cyclins CCND2 and CCND3 which polyubiquitination and subsequent degradation are inhibited by calmodulin. Through CCND2 and CCND3 degradation induces cell-cycle arrest in G(0). SCF(FBXL2) also mediates PIK3R2 ubiquitination and proteasomal degradation thereby regulating phosphatidylinositol 3-kinase signaling and autophagy (By similarity). PCYT1A monoubiquitination by SCF(FBXL2) and subsequent degradation regulates synthesis of phosphatidylcholine, which is utilized for formation of membranes and of pulmonary surfactant. The SCF(FBXL2) complex acts as a regulator of inflammation by mediating ubiquitination and degradation of TRAF proteins (TRAF1, TRAF2, TRAF3, TRAF4, TRAF5 and TRAF6) (By similarity). The SCF(FBXL2) complex acts as a negative regulator of the NLRP3 inflammasome by mediating ubiquitination and degradation of NLRP3 (By similarity).</text>
</comment>
<comment type="pathway">
    <text evidence="2">Protein modification; protein ubiquitination.</text>
</comment>
<comment type="subunit">
    <text evidence="2">Part of the SCF (SKP1-CUL1-F-box) E3 ubiquitin-protein ligase complex SCF(FBXL2) composed of CUL1, SKP1, RBX1 and FBXL2. Interacts with calmodulin; may antagonize substrate ubiquitination by SCF(FBXL2). May interact with PIK3R1. Interacts with PTPN13.</text>
</comment>
<comment type="subcellular location">
    <subcellularLocation>
        <location evidence="2">Membrane</location>
        <topology evidence="2">Lipid-anchor</topology>
    </subcellularLocation>
</comment>
<comment type="alternative products">
    <event type="alternative splicing"/>
    <isoform>
        <id>Q5R3Z8-1</id>
        <name>1</name>
        <sequence type="displayed"/>
    </isoform>
    <isoform>
        <id>Q5R3Z8-2</id>
        <name>2</name>
        <sequence type="described" ref="VSP_035780 VSP_035781"/>
    </isoform>
</comment>
<comment type="domain">
    <text evidence="2">The CAAX motif is a signal for the geranylgeranylation of FBXL2 and is required for its association with cell membranes and the recruitment of substrates to the active SCF(FBXL2) complex.</text>
</comment>
<comment type="PTM">
    <text evidence="1">Phosphorylated by GSK-beta (GSK3B), promoting recognition by FBXO3, leading to its ubiquitination by the SCF(FBXO3) complex.</text>
</comment>
<comment type="PTM">
    <text evidence="1">Ubiquitinated at Lys-201 by the SCF(FBXO3) complex in response to lipopolysaccharide (LPS), leading to its degradation by the proteasome.</text>
</comment>
<keyword id="KW-0025">Alternative splicing</keyword>
<keyword id="KW-0106">Calcium</keyword>
<keyword id="KW-0112">Calmodulin-binding</keyword>
<keyword id="KW-1017">Isopeptide bond</keyword>
<keyword id="KW-0433">Leucine-rich repeat</keyword>
<keyword id="KW-0449">Lipoprotein</keyword>
<keyword id="KW-0472">Membrane</keyword>
<keyword id="KW-0597">Phosphoprotein</keyword>
<keyword id="KW-0636">Prenylation</keyword>
<keyword id="KW-1185">Reference proteome</keyword>
<keyword id="KW-0677">Repeat</keyword>
<keyword id="KW-0832">Ubl conjugation</keyword>
<keyword id="KW-0833">Ubl conjugation pathway</keyword>
<sequence>MVFSNNDEGRINKKLPKELLLRIFSFLDIVTLCRCAQISKAWNILALDGSNWQRIDLFNFQTDVEGRVVENISKRCGGFLRKLSLRGCIGVGDSSLKTFAQNCRNIEHLNLNGCTKITDSTCYSLSRFCSKLKHLDLTSCVSITNSSLKGISEGCRNLEYLNLSWCDQITKDGIEALVRGCRGLKALLLRGCTQLEDEALKHIQNYCHELVSLNLQSCSRITDEGVVQICRGCHRLQALCLSGCSNLTDASLTALGLNCPRLQILEAARCSHLTDAGFTLLARNCHELEKMDLEECILITDSTLIQLSIHCPKLQALSLSHCELITDDGILHLSNSTCGHERLRVLELDNCLLITDVALEHLENCRGLERLELYDCQQVTRAGIKRMRAQLPHVKVHAYFAPVTPPTAVTGSGQRLCRCCVIL</sequence>
<accession>Q5R3Z8</accession>
<accession>Q5R4A1</accession>
<protein>
    <recommendedName>
        <fullName evidence="5">F-box/LRR-repeat protein 2</fullName>
    </recommendedName>
    <alternativeName>
        <fullName evidence="5">F-box and leucine-rich repeat protein 2</fullName>
    </alternativeName>
</protein>
<reference key="1">
    <citation type="submission" date="2004-11" db="EMBL/GenBank/DDBJ databases">
        <authorList>
            <consortium name="The German cDNA consortium"/>
        </authorList>
    </citation>
    <scope>NUCLEOTIDE SEQUENCE [LARGE SCALE MRNA] (ISOFORMS 1 AND 2)</scope>
    <source>
        <tissue>Brain cortex</tissue>
    </source>
</reference>
<organism>
    <name type="scientific">Pongo abelii</name>
    <name type="common">Sumatran orangutan</name>
    <name type="synonym">Pongo pygmaeus abelii</name>
    <dbReference type="NCBI Taxonomy" id="9601"/>
    <lineage>
        <taxon>Eukaryota</taxon>
        <taxon>Metazoa</taxon>
        <taxon>Chordata</taxon>
        <taxon>Craniata</taxon>
        <taxon>Vertebrata</taxon>
        <taxon>Euteleostomi</taxon>
        <taxon>Mammalia</taxon>
        <taxon>Eutheria</taxon>
        <taxon>Euarchontoglires</taxon>
        <taxon>Primates</taxon>
        <taxon>Haplorrhini</taxon>
        <taxon>Catarrhini</taxon>
        <taxon>Hominidae</taxon>
        <taxon>Pongo</taxon>
    </lineage>
</organism>
<dbReference type="EMBL" id="CR861354">
    <property type="protein sequence ID" value="CAH93415.1"/>
    <property type="molecule type" value="mRNA"/>
</dbReference>
<dbReference type="EMBL" id="CR861462">
    <property type="protein sequence ID" value="CAH93518.1"/>
    <property type="molecule type" value="mRNA"/>
</dbReference>
<dbReference type="RefSeq" id="NP_001127056.1">
    <property type="nucleotide sequence ID" value="NM_001133584.1"/>
</dbReference>
<dbReference type="RefSeq" id="NP_001128909.1">
    <property type="nucleotide sequence ID" value="NM_001135437.1"/>
</dbReference>
<dbReference type="SMR" id="Q5R3Z8"/>
<dbReference type="STRING" id="9601.ENSPPYP00000015699"/>
<dbReference type="GeneID" id="100174084"/>
<dbReference type="KEGG" id="pon:100174084"/>
<dbReference type="CTD" id="25827"/>
<dbReference type="eggNOG" id="KOG4341">
    <property type="taxonomic scope" value="Eukaryota"/>
</dbReference>
<dbReference type="InParanoid" id="Q5R3Z8"/>
<dbReference type="OrthoDB" id="550575at2759"/>
<dbReference type="UniPathway" id="UPA00143"/>
<dbReference type="Proteomes" id="UP000001595">
    <property type="component" value="Unplaced"/>
</dbReference>
<dbReference type="GO" id="GO:0005737">
    <property type="term" value="C:cytoplasm"/>
    <property type="evidence" value="ECO:0007669"/>
    <property type="project" value="TreeGrafter"/>
</dbReference>
<dbReference type="GO" id="GO:0016020">
    <property type="term" value="C:membrane"/>
    <property type="evidence" value="ECO:0000250"/>
    <property type="project" value="UniProtKB"/>
</dbReference>
<dbReference type="GO" id="GO:0019005">
    <property type="term" value="C:SCF ubiquitin ligase complex"/>
    <property type="evidence" value="ECO:0000250"/>
    <property type="project" value="UniProtKB"/>
</dbReference>
<dbReference type="GO" id="GO:0005516">
    <property type="term" value="F:calmodulin binding"/>
    <property type="evidence" value="ECO:0007669"/>
    <property type="project" value="UniProtKB-KW"/>
</dbReference>
<dbReference type="GO" id="GO:1990756">
    <property type="term" value="F:ubiquitin-like ligase-substrate adaptor activity"/>
    <property type="evidence" value="ECO:0000250"/>
    <property type="project" value="UniProtKB"/>
</dbReference>
<dbReference type="GO" id="GO:1900226">
    <property type="term" value="P:negative regulation of NLRP3 inflammasome complex assembly"/>
    <property type="evidence" value="ECO:0000250"/>
    <property type="project" value="UniProtKB"/>
</dbReference>
<dbReference type="GO" id="GO:0016567">
    <property type="term" value="P:protein ubiquitination"/>
    <property type="evidence" value="ECO:0000250"/>
    <property type="project" value="UniProtKB"/>
</dbReference>
<dbReference type="GO" id="GO:0010506">
    <property type="term" value="P:regulation of autophagy"/>
    <property type="evidence" value="ECO:0000250"/>
    <property type="project" value="UniProtKB"/>
</dbReference>
<dbReference type="GO" id="GO:0050727">
    <property type="term" value="P:regulation of inflammatory response"/>
    <property type="evidence" value="ECO:0000250"/>
    <property type="project" value="UniProtKB"/>
</dbReference>
<dbReference type="GO" id="GO:0051896">
    <property type="term" value="P:regulation of phosphatidylinositol 3-kinase/protein kinase B signal transduction"/>
    <property type="evidence" value="ECO:0000250"/>
    <property type="project" value="UniProtKB"/>
</dbReference>
<dbReference type="GO" id="GO:0031146">
    <property type="term" value="P:SCF-dependent proteasomal ubiquitin-dependent protein catabolic process"/>
    <property type="evidence" value="ECO:0000250"/>
    <property type="project" value="UniProtKB"/>
</dbReference>
<dbReference type="CDD" id="cd22115">
    <property type="entry name" value="F-box_FBXL2-like"/>
    <property type="match status" value="1"/>
</dbReference>
<dbReference type="FunFam" id="3.80.10.10:FF:000042">
    <property type="entry name" value="F-box/LRR-repeat protein 20 isoform 2"/>
    <property type="match status" value="1"/>
</dbReference>
<dbReference type="FunFam" id="3.80.10.10:FF:000060">
    <property type="entry name" value="F-box/LRR-repeat protein 20 isoform 2"/>
    <property type="match status" value="1"/>
</dbReference>
<dbReference type="FunFam" id="1.20.1280.50:FF:000013">
    <property type="entry name" value="F-box/LRR-repeat protein 20 isoform X1"/>
    <property type="match status" value="1"/>
</dbReference>
<dbReference type="Gene3D" id="3.80.10.10">
    <property type="entry name" value="Ribonuclease Inhibitor"/>
    <property type="match status" value="2"/>
</dbReference>
<dbReference type="InterPro" id="IPR001810">
    <property type="entry name" value="F-box_dom"/>
</dbReference>
<dbReference type="InterPro" id="IPR050648">
    <property type="entry name" value="F-box_LRR-repeat"/>
</dbReference>
<dbReference type="InterPro" id="IPR001611">
    <property type="entry name" value="Leu-rich_rpt"/>
</dbReference>
<dbReference type="InterPro" id="IPR006553">
    <property type="entry name" value="Leu-rich_rpt_Cys-con_subtyp"/>
</dbReference>
<dbReference type="InterPro" id="IPR032675">
    <property type="entry name" value="LRR_dom_sf"/>
</dbReference>
<dbReference type="PANTHER" id="PTHR13382:SF40">
    <property type="entry name" value="F-BOX_LRR-REPEAT PROTEIN 2"/>
    <property type="match status" value="1"/>
</dbReference>
<dbReference type="PANTHER" id="PTHR13382">
    <property type="entry name" value="MITOCHONDRIAL ATP SYNTHASE COUPLING FACTOR B"/>
    <property type="match status" value="1"/>
</dbReference>
<dbReference type="Pfam" id="PF12937">
    <property type="entry name" value="F-box-like"/>
    <property type="match status" value="1"/>
</dbReference>
<dbReference type="Pfam" id="PF13516">
    <property type="entry name" value="LRR_6"/>
    <property type="match status" value="5"/>
</dbReference>
<dbReference type="SMART" id="SM00256">
    <property type="entry name" value="FBOX"/>
    <property type="match status" value="1"/>
</dbReference>
<dbReference type="SMART" id="SM00367">
    <property type="entry name" value="LRR_CC"/>
    <property type="match status" value="11"/>
</dbReference>
<dbReference type="SUPFAM" id="SSF52047">
    <property type="entry name" value="RNI-like"/>
    <property type="match status" value="1"/>
</dbReference>
<dbReference type="PROSITE" id="PS50181">
    <property type="entry name" value="FBOX"/>
    <property type="match status" value="1"/>
</dbReference>